<name>GNRHR_SHEEP</name>
<evidence type="ECO:0000255" key="1"/>
<evidence type="ECO:0000255" key="2">
    <source>
        <dbReference type="PROSITE-ProRule" id="PRU00521"/>
    </source>
</evidence>
<evidence type="ECO:0000305" key="3"/>
<feature type="chain" id="PRO_0000069492" description="Gonadotropin-releasing hormone receptor">
    <location>
        <begin position="1"/>
        <end position="328"/>
    </location>
</feature>
<feature type="topological domain" description="Extracellular" evidence="1">
    <location>
        <begin position="1"/>
        <end position="38"/>
    </location>
</feature>
<feature type="transmembrane region" description="Helical; Name=1" evidence="1">
    <location>
        <begin position="39"/>
        <end position="58"/>
    </location>
</feature>
<feature type="topological domain" description="Cytoplasmic" evidence="1">
    <location>
        <begin position="59"/>
        <end position="77"/>
    </location>
</feature>
<feature type="transmembrane region" description="Helical; Name=2" evidence="1">
    <location>
        <begin position="78"/>
        <end position="97"/>
    </location>
</feature>
<feature type="topological domain" description="Extracellular" evidence="1">
    <location>
        <begin position="98"/>
        <end position="115"/>
    </location>
</feature>
<feature type="transmembrane region" description="Helical; Name=3" evidence="1">
    <location>
        <begin position="116"/>
        <end position="137"/>
    </location>
</feature>
<feature type="topological domain" description="Cytoplasmic" evidence="1">
    <location>
        <begin position="138"/>
        <end position="164"/>
    </location>
</feature>
<feature type="transmembrane region" description="Helical; Name=4" evidence="1">
    <location>
        <begin position="165"/>
        <end position="184"/>
    </location>
</feature>
<feature type="topological domain" description="Extracellular" evidence="1">
    <location>
        <begin position="185"/>
        <end position="212"/>
    </location>
</feature>
<feature type="transmembrane region" description="Helical; Name=5" evidence="1">
    <location>
        <begin position="213"/>
        <end position="232"/>
    </location>
</feature>
<feature type="topological domain" description="Cytoplasmic" evidence="1">
    <location>
        <begin position="233"/>
        <end position="281"/>
    </location>
</feature>
<feature type="transmembrane region" description="Helical; Name=6" evidence="1">
    <location>
        <begin position="282"/>
        <end position="300"/>
    </location>
</feature>
<feature type="topological domain" description="Extracellular" evidence="1">
    <location>
        <begin position="301"/>
        <end position="306"/>
    </location>
</feature>
<feature type="transmembrane region" description="Helical; Name=7" evidence="1">
    <location>
        <begin position="307"/>
        <end position="326"/>
    </location>
</feature>
<feature type="topological domain" description="Cytoplasmic" evidence="1">
    <location>
        <begin position="327"/>
        <end position="328"/>
    </location>
</feature>
<feature type="glycosylation site" description="N-linked (GlcNAc...) asparagine" evidence="1">
    <location>
        <position position="18"/>
    </location>
</feature>
<feature type="glycosylation site" description="N-linked (GlcNAc...) asparagine" evidence="1">
    <location>
        <position position="102"/>
    </location>
</feature>
<feature type="disulfide bond" evidence="2">
    <location>
        <begin position="114"/>
        <end position="196"/>
    </location>
</feature>
<feature type="sequence conflict" description="In Ref. 2; CAA50978." evidence="3" ref="2">
    <original>D</original>
    <variation>N</variation>
    <location>
        <position position="8"/>
    </location>
</feature>
<feature type="sequence conflict" description="In Ref. 2; CAA50978." evidence="3" ref="2">
    <original>S</original>
    <variation>R</variation>
    <location>
        <position position="27"/>
    </location>
</feature>
<feature type="sequence conflict" description="In Ref. 2; CAA50978." evidence="3" ref="2">
    <original>T</original>
    <variation>A</variation>
    <location>
        <position position="64"/>
    </location>
</feature>
<feature type="sequence conflict" description="In Ref. 2; CAA50978." evidence="3" ref="2">
    <original>A</original>
    <variation>G</variation>
    <location>
        <position position="312"/>
    </location>
</feature>
<organism>
    <name type="scientific">Ovis aries</name>
    <name type="common">Sheep</name>
    <dbReference type="NCBI Taxonomy" id="9940"/>
    <lineage>
        <taxon>Eukaryota</taxon>
        <taxon>Metazoa</taxon>
        <taxon>Chordata</taxon>
        <taxon>Craniata</taxon>
        <taxon>Vertebrata</taxon>
        <taxon>Euteleostomi</taxon>
        <taxon>Mammalia</taxon>
        <taxon>Eutheria</taxon>
        <taxon>Laurasiatheria</taxon>
        <taxon>Artiodactyla</taxon>
        <taxon>Ruminantia</taxon>
        <taxon>Pecora</taxon>
        <taxon>Bovidae</taxon>
        <taxon>Caprinae</taxon>
        <taxon>Ovis</taxon>
    </lineage>
</organism>
<proteinExistence type="evidence at transcript level"/>
<gene>
    <name type="primary">GNRHR</name>
</gene>
<sequence length="328" mass="37685">MANGDSPDQNENHCSAINSSILLTPGSLPTLTLSGKIRVTVTFFLFLLSTIFNTSFLLKLQNWTQRKEKRKKLSKMKVLLKHLTLANLLETLIVMPLDGMWNITVQWYAGELLCKVLSYLKLFSMYAPAFMMVVISLDRSLAITRPLAVKSNSKLGQFMIGLAWLLSSIFAGPQLYIFGMIHLADDSGQTEGFSQCVTHCSFPQWWHQAFYNFFTFSCLFIIPLLIMLICNAKIIFTLTRVLHQDPHKLQLNQSKNNIPQARLRTLKMTVAFATSFTVCWTPYYVLGIWYWFDPDMVNRVSDPVNHFFFLFAFLNPCFDPLIYGYFSL</sequence>
<reference key="1">
    <citation type="journal article" date="1993" name="Biochem. Biophys. Res. Commun.">
        <title>Comparative sequence analysis and functional characterization of the cloned sheep gonadotropin-releasing hormone receptor reveal differences in primary structure and ligand specificity among mammalian receptors.</title>
        <authorList>
            <person name="Illing N."/>
            <person name="Jacobs G.F.M."/>
            <person name="Becker I.I."/>
            <person name="Flanagan C.A."/>
            <person name="Davidson J.S."/>
            <person name="Eales A."/>
            <person name="Zhou W."/>
            <person name="Sealfon S.C."/>
            <person name="Millar R.P."/>
        </authorList>
    </citation>
    <scope>NUCLEOTIDE SEQUENCE [MRNA]</scope>
    <source>
        <tissue>Pituitary</tissue>
    </source>
</reference>
<reference key="2">
    <citation type="journal article" date="1993" name="Mol. Cell. Endocrinol.">
        <title>Cloning and sequencing of the sheep pituitary gonadotropin-releasing hormone receptor and changes in expression of its mRNA during the estrous cycle.</title>
        <authorList>
            <person name="Brooks J."/>
            <person name="Taylor P.L."/>
            <person name="Sauders P.T.K."/>
            <person name="Eidne K.A."/>
            <person name="Struthers W.J."/>
            <person name="McNeilly A.S."/>
        </authorList>
    </citation>
    <scope>NUCLEOTIDE SEQUENCE [MRNA]</scope>
    <source>
        <strain>Scottish blackface</strain>
        <tissue>Pituitary</tissue>
    </source>
</reference>
<reference key="3">
    <citation type="journal article" date="1996" name="Gene">
        <title>The gene encoding the ovine gonadotropin-releasing hormone (GnRH) receptor: cloning and initial characterization.</title>
        <authorList>
            <person name="Campion C.E."/>
            <person name="Turzillo A.M."/>
            <person name="Clay C.M."/>
        </authorList>
    </citation>
    <scope>NUCLEOTIDE SEQUENCE [GENOMIC DNA]</scope>
    <source>
        <tissue>Liver</tissue>
    </source>
</reference>
<dbReference type="EMBL" id="L22215">
    <property type="protein sequence ID" value="AAC37336.1"/>
    <property type="molecule type" value="mRNA"/>
</dbReference>
<dbReference type="EMBL" id="X72088">
    <property type="protein sequence ID" value="CAA50978.1"/>
    <property type="molecule type" value="mRNA"/>
</dbReference>
<dbReference type="EMBL" id="L42937">
    <property type="protein sequence ID" value="AAB38515.1"/>
    <property type="molecule type" value="Genomic_DNA"/>
</dbReference>
<dbReference type="EMBL" id="AH004943">
    <property type="protein sequence ID" value="AAB41939.1"/>
    <property type="molecule type" value="Genomic_DNA"/>
</dbReference>
<dbReference type="PIR" id="JN0882">
    <property type="entry name" value="JN0882"/>
</dbReference>
<dbReference type="RefSeq" id="NP_001009397.1">
    <property type="nucleotide sequence ID" value="NM_001009397.1"/>
</dbReference>
<dbReference type="SMR" id="P32237"/>
<dbReference type="STRING" id="9940.ENSOARP00000008075"/>
<dbReference type="GlyCosmos" id="P32237">
    <property type="glycosylation" value="2 sites, No reported glycans"/>
</dbReference>
<dbReference type="PaxDb" id="9940-ENSOARP00000008075"/>
<dbReference type="Ensembl" id="ENSOART00185060897">
    <property type="protein sequence ID" value="ENSOARP00185030850"/>
    <property type="gene ID" value="ENSOARG00185036530"/>
</dbReference>
<dbReference type="Ensembl" id="ENSOART00215065262">
    <property type="protein sequence ID" value="ENSOARP00215034999"/>
    <property type="gene ID" value="ENSOARG00215038695"/>
</dbReference>
<dbReference type="Ensembl" id="ENSOART00225068356">
    <property type="protein sequence ID" value="ENSOARP00225035012"/>
    <property type="gene ID" value="ENSOARG00225041165"/>
</dbReference>
<dbReference type="Ensembl" id="ENSOART00260016823">
    <property type="protein sequence ID" value="ENSOARP00260008479"/>
    <property type="gene ID" value="ENSOARG00260010360"/>
</dbReference>
<dbReference type="GeneID" id="443413"/>
<dbReference type="KEGG" id="oas:443413"/>
<dbReference type="CTD" id="2798"/>
<dbReference type="eggNOG" id="KOG3656">
    <property type="taxonomic scope" value="Eukaryota"/>
</dbReference>
<dbReference type="HOGENOM" id="CLU_009579_15_2_1"/>
<dbReference type="OMA" id="LHQDPHE"/>
<dbReference type="OrthoDB" id="6022667at2759"/>
<dbReference type="Proteomes" id="UP000002356">
    <property type="component" value="Chromosome 6"/>
</dbReference>
<dbReference type="Bgee" id="ENSOARG00000007526">
    <property type="expression patterns" value="Expressed in pituitary gland and 14 other cell types or tissues"/>
</dbReference>
<dbReference type="GO" id="GO:0005886">
    <property type="term" value="C:plasma membrane"/>
    <property type="evidence" value="ECO:0007669"/>
    <property type="project" value="UniProtKB-SubCell"/>
</dbReference>
<dbReference type="GO" id="GO:0004968">
    <property type="term" value="F:gonadotropin-releasing hormone receptor activity"/>
    <property type="evidence" value="ECO:0007669"/>
    <property type="project" value="Ensembl"/>
</dbReference>
<dbReference type="GO" id="GO:0042277">
    <property type="term" value="F:peptide binding"/>
    <property type="evidence" value="ECO:0007669"/>
    <property type="project" value="TreeGrafter"/>
</dbReference>
<dbReference type="FunFam" id="1.20.1070.10:FF:000203">
    <property type="entry name" value="gonadotropin-releasing hormone receptor"/>
    <property type="match status" value="1"/>
</dbReference>
<dbReference type="Gene3D" id="1.20.1070.10">
    <property type="entry name" value="Rhodopsin 7-helix transmembrane proteins"/>
    <property type="match status" value="1"/>
</dbReference>
<dbReference type="InterPro" id="IPR000276">
    <property type="entry name" value="GPCR_Rhodpsn"/>
</dbReference>
<dbReference type="InterPro" id="IPR017452">
    <property type="entry name" value="GPCR_Rhodpsn_7TM"/>
</dbReference>
<dbReference type="InterPro" id="IPR001658">
    <property type="entry name" value="GphnRH_fam_rcpt"/>
</dbReference>
<dbReference type="PANTHER" id="PTHR24241:SF22">
    <property type="entry name" value="GONADOTROPIN-RELEASING HORMONE RECEPTOR"/>
    <property type="match status" value="1"/>
</dbReference>
<dbReference type="PANTHER" id="PTHR24241">
    <property type="entry name" value="NEUROPEPTIDE RECEPTOR-RELATED G-PROTEIN COUPLED RECEPTOR"/>
    <property type="match status" value="1"/>
</dbReference>
<dbReference type="Pfam" id="PF00001">
    <property type="entry name" value="7tm_1"/>
    <property type="match status" value="1"/>
</dbReference>
<dbReference type="PRINTS" id="PR00529">
    <property type="entry name" value="GNADOTRPHINR"/>
</dbReference>
<dbReference type="PRINTS" id="PR00237">
    <property type="entry name" value="GPCRRHODOPSN"/>
</dbReference>
<dbReference type="SUPFAM" id="SSF81321">
    <property type="entry name" value="Family A G protein-coupled receptor-like"/>
    <property type="match status" value="1"/>
</dbReference>
<dbReference type="PROSITE" id="PS00237">
    <property type="entry name" value="G_PROTEIN_RECEP_F1_1"/>
    <property type="match status" value="1"/>
</dbReference>
<dbReference type="PROSITE" id="PS50262">
    <property type="entry name" value="G_PROTEIN_RECEP_F1_2"/>
    <property type="match status" value="1"/>
</dbReference>
<protein>
    <recommendedName>
        <fullName>Gonadotropin-releasing hormone receptor</fullName>
        <shortName>GnRH receptor</shortName>
        <shortName>GnRH-R</shortName>
    </recommendedName>
</protein>
<comment type="function">
    <text>Receptor for gonadotropin releasing hormone (GnRH) that mediates the action of GnRH to stimulate the secretion of the gonadotropic hormones luteinizing hormone (LH) and follicle-stimulating hormone (FSH). This receptor mediates its action by association with G-proteins that activate a phosphatidylinositol-calcium second messenger system.</text>
</comment>
<comment type="subcellular location">
    <subcellularLocation>
        <location>Cell membrane</location>
        <topology>Multi-pass membrane protein</topology>
    </subcellularLocation>
</comment>
<comment type="similarity">
    <text evidence="2">Belongs to the G-protein coupled receptor 1 family.</text>
</comment>
<keyword id="KW-1003">Cell membrane</keyword>
<keyword id="KW-1015">Disulfide bond</keyword>
<keyword id="KW-0297">G-protein coupled receptor</keyword>
<keyword id="KW-0325">Glycoprotein</keyword>
<keyword id="KW-0472">Membrane</keyword>
<keyword id="KW-0675">Receptor</keyword>
<keyword id="KW-1185">Reference proteome</keyword>
<keyword id="KW-0807">Transducer</keyword>
<keyword id="KW-0812">Transmembrane</keyword>
<keyword id="KW-1133">Transmembrane helix</keyword>
<accession>P32237</accession>